<name>RL24_ECOL5</name>
<proteinExistence type="inferred from homology"/>
<keyword id="KW-0687">Ribonucleoprotein</keyword>
<keyword id="KW-0689">Ribosomal protein</keyword>
<keyword id="KW-0694">RNA-binding</keyword>
<keyword id="KW-0699">rRNA-binding</keyword>
<reference key="1">
    <citation type="journal article" date="2006" name="Mol. Microbiol.">
        <title>Role of pathogenicity island-associated integrases in the genome plasticity of uropathogenic Escherichia coli strain 536.</title>
        <authorList>
            <person name="Hochhut B."/>
            <person name="Wilde C."/>
            <person name="Balling G."/>
            <person name="Middendorf B."/>
            <person name="Dobrindt U."/>
            <person name="Brzuszkiewicz E."/>
            <person name="Gottschalk G."/>
            <person name="Carniel E."/>
            <person name="Hacker J."/>
        </authorList>
    </citation>
    <scope>NUCLEOTIDE SEQUENCE [LARGE SCALE GENOMIC DNA]</scope>
    <source>
        <strain>536 / UPEC</strain>
    </source>
</reference>
<evidence type="ECO:0000255" key="1">
    <source>
        <dbReference type="HAMAP-Rule" id="MF_01326"/>
    </source>
</evidence>
<evidence type="ECO:0000305" key="2"/>
<gene>
    <name evidence="1" type="primary">rplX</name>
    <name type="ordered locus">ECP_3397</name>
</gene>
<comment type="function">
    <text evidence="1">One of two assembly initiator proteins, it binds directly to the 5'-end of the 23S rRNA, where it nucleates assembly of the 50S subunit.</text>
</comment>
<comment type="function">
    <text evidence="1">One of the proteins that surrounds the polypeptide exit tunnel on the outside of the subunit.</text>
</comment>
<comment type="subunit">
    <text evidence="1">Part of the 50S ribosomal subunit.</text>
</comment>
<comment type="similarity">
    <text evidence="1">Belongs to the universal ribosomal protein uL24 family.</text>
</comment>
<sequence>MAAKIRRDDEVIVLTGKDKGKRGKVKNVLSSGKVIVEGINLVKKHQKPVPALNQPGGIVEKEAAIQVSNVAIFNATTGKADRVGFRFEDGKKVRFFKSNSETIK</sequence>
<dbReference type="EMBL" id="CP000247">
    <property type="protein sequence ID" value="ABG71377.1"/>
    <property type="molecule type" value="Genomic_DNA"/>
</dbReference>
<dbReference type="RefSeq" id="WP_000729186.1">
    <property type="nucleotide sequence ID" value="NC_008253.1"/>
</dbReference>
<dbReference type="SMR" id="Q0TCF2"/>
<dbReference type="KEGG" id="ecp:ECP_3397"/>
<dbReference type="HOGENOM" id="CLU_093315_2_2_6"/>
<dbReference type="Proteomes" id="UP000009182">
    <property type="component" value="Chromosome"/>
</dbReference>
<dbReference type="GO" id="GO:0005829">
    <property type="term" value="C:cytosol"/>
    <property type="evidence" value="ECO:0007669"/>
    <property type="project" value="UniProtKB-ARBA"/>
</dbReference>
<dbReference type="GO" id="GO:1990904">
    <property type="term" value="C:ribonucleoprotein complex"/>
    <property type="evidence" value="ECO:0007669"/>
    <property type="project" value="UniProtKB-KW"/>
</dbReference>
<dbReference type="GO" id="GO:0005840">
    <property type="term" value="C:ribosome"/>
    <property type="evidence" value="ECO:0007669"/>
    <property type="project" value="UniProtKB-KW"/>
</dbReference>
<dbReference type="GO" id="GO:0019843">
    <property type="term" value="F:rRNA binding"/>
    <property type="evidence" value="ECO:0007669"/>
    <property type="project" value="UniProtKB-UniRule"/>
</dbReference>
<dbReference type="GO" id="GO:0003735">
    <property type="term" value="F:structural constituent of ribosome"/>
    <property type="evidence" value="ECO:0007669"/>
    <property type="project" value="InterPro"/>
</dbReference>
<dbReference type="GO" id="GO:0006412">
    <property type="term" value="P:translation"/>
    <property type="evidence" value="ECO:0007669"/>
    <property type="project" value="UniProtKB-UniRule"/>
</dbReference>
<dbReference type="CDD" id="cd06089">
    <property type="entry name" value="KOW_RPL26"/>
    <property type="match status" value="1"/>
</dbReference>
<dbReference type="FunFam" id="2.30.30.30:FF:000004">
    <property type="entry name" value="50S ribosomal protein L24"/>
    <property type="match status" value="1"/>
</dbReference>
<dbReference type="Gene3D" id="2.30.30.30">
    <property type="match status" value="1"/>
</dbReference>
<dbReference type="HAMAP" id="MF_01326_B">
    <property type="entry name" value="Ribosomal_uL24_B"/>
    <property type="match status" value="1"/>
</dbReference>
<dbReference type="InterPro" id="IPR005824">
    <property type="entry name" value="KOW"/>
</dbReference>
<dbReference type="InterPro" id="IPR014722">
    <property type="entry name" value="Rib_uL2_dom2"/>
</dbReference>
<dbReference type="InterPro" id="IPR003256">
    <property type="entry name" value="Ribosomal_uL24"/>
</dbReference>
<dbReference type="InterPro" id="IPR005825">
    <property type="entry name" value="Ribosomal_uL24_CS"/>
</dbReference>
<dbReference type="InterPro" id="IPR041988">
    <property type="entry name" value="Ribosomal_uL24_KOW"/>
</dbReference>
<dbReference type="InterPro" id="IPR008991">
    <property type="entry name" value="Translation_prot_SH3-like_sf"/>
</dbReference>
<dbReference type="NCBIfam" id="TIGR01079">
    <property type="entry name" value="rplX_bact"/>
    <property type="match status" value="1"/>
</dbReference>
<dbReference type="PANTHER" id="PTHR12903">
    <property type="entry name" value="MITOCHONDRIAL RIBOSOMAL PROTEIN L24"/>
    <property type="match status" value="1"/>
</dbReference>
<dbReference type="Pfam" id="PF00467">
    <property type="entry name" value="KOW"/>
    <property type="match status" value="1"/>
</dbReference>
<dbReference type="Pfam" id="PF17136">
    <property type="entry name" value="ribosomal_L24"/>
    <property type="match status" value="1"/>
</dbReference>
<dbReference type="SMART" id="SM00739">
    <property type="entry name" value="KOW"/>
    <property type="match status" value="1"/>
</dbReference>
<dbReference type="SUPFAM" id="SSF50104">
    <property type="entry name" value="Translation proteins SH3-like domain"/>
    <property type="match status" value="1"/>
</dbReference>
<dbReference type="PROSITE" id="PS01108">
    <property type="entry name" value="RIBOSOMAL_L24"/>
    <property type="match status" value="1"/>
</dbReference>
<organism>
    <name type="scientific">Escherichia coli O6:K15:H31 (strain 536 / UPEC)</name>
    <dbReference type="NCBI Taxonomy" id="362663"/>
    <lineage>
        <taxon>Bacteria</taxon>
        <taxon>Pseudomonadati</taxon>
        <taxon>Pseudomonadota</taxon>
        <taxon>Gammaproteobacteria</taxon>
        <taxon>Enterobacterales</taxon>
        <taxon>Enterobacteriaceae</taxon>
        <taxon>Escherichia</taxon>
    </lineage>
</organism>
<feature type="chain" id="PRO_1000052210" description="Large ribosomal subunit protein uL24">
    <location>
        <begin position="1"/>
        <end position="104"/>
    </location>
</feature>
<protein>
    <recommendedName>
        <fullName evidence="1">Large ribosomal subunit protein uL24</fullName>
    </recommendedName>
    <alternativeName>
        <fullName evidence="2">50S ribosomal protein L24</fullName>
    </alternativeName>
</protein>
<accession>Q0TCF2</accession>